<keyword id="KW-0143">Chaperone</keyword>
<keyword id="KW-0496">Mitochondrion</keyword>
<keyword id="KW-1185">Reference proteome</keyword>
<name>SDHF2_KLULA</name>
<feature type="chain" id="PRO_0000383193" description="Succinate dehydrogenase assembly factor 2, mitochondrial">
    <location>
        <begin position="1"/>
        <end position="163"/>
    </location>
</feature>
<accession>Q6CND9</accession>
<reference key="1">
    <citation type="journal article" date="2004" name="Nature">
        <title>Genome evolution in yeasts.</title>
        <authorList>
            <person name="Dujon B."/>
            <person name="Sherman D."/>
            <person name="Fischer G."/>
            <person name="Durrens P."/>
            <person name="Casaregola S."/>
            <person name="Lafontaine I."/>
            <person name="de Montigny J."/>
            <person name="Marck C."/>
            <person name="Neuveglise C."/>
            <person name="Talla E."/>
            <person name="Goffard N."/>
            <person name="Frangeul L."/>
            <person name="Aigle M."/>
            <person name="Anthouard V."/>
            <person name="Babour A."/>
            <person name="Barbe V."/>
            <person name="Barnay S."/>
            <person name="Blanchin S."/>
            <person name="Beckerich J.-M."/>
            <person name="Beyne E."/>
            <person name="Bleykasten C."/>
            <person name="Boisrame A."/>
            <person name="Boyer J."/>
            <person name="Cattolico L."/>
            <person name="Confanioleri F."/>
            <person name="de Daruvar A."/>
            <person name="Despons L."/>
            <person name="Fabre E."/>
            <person name="Fairhead C."/>
            <person name="Ferry-Dumazet H."/>
            <person name="Groppi A."/>
            <person name="Hantraye F."/>
            <person name="Hennequin C."/>
            <person name="Jauniaux N."/>
            <person name="Joyet P."/>
            <person name="Kachouri R."/>
            <person name="Kerrest A."/>
            <person name="Koszul R."/>
            <person name="Lemaire M."/>
            <person name="Lesur I."/>
            <person name="Ma L."/>
            <person name="Muller H."/>
            <person name="Nicaud J.-M."/>
            <person name="Nikolski M."/>
            <person name="Oztas S."/>
            <person name="Ozier-Kalogeropoulos O."/>
            <person name="Pellenz S."/>
            <person name="Potier S."/>
            <person name="Richard G.-F."/>
            <person name="Straub M.-L."/>
            <person name="Suleau A."/>
            <person name="Swennen D."/>
            <person name="Tekaia F."/>
            <person name="Wesolowski-Louvel M."/>
            <person name="Westhof E."/>
            <person name="Wirth B."/>
            <person name="Zeniou-Meyer M."/>
            <person name="Zivanovic Y."/>
            <person name="Bolotin-Fukuhara M."/>
            <person name="Thierry A."/>
            <person name="Bouchier C."/>
            <person name="Caudron B."/>
            <person name="Scarpelli C."/>
            <person name="Gaillardin C."/>
            <person name="Weissenbach J."/>
            <person name="Wincker P."/>
            <person name="Souciet J.-L."/>
        </authorList>
    </citation>
    <scope>NUCLEOTIDE SEQUENCE [LARGE SCALE GENOMIC DNA]</scope>
    <source>
        <strain>ATCC 8585 / CBS 2359 / DSM 70799 / NBRC 1267 / NRRL Y-1140 / WM37</strain>
    </source>
</reference>
<organism>
    <name type="scientific">Kluyveromyces lactis (strain ATCC 8585 / CBS 2359 / DSM 70799 / NBRC 1267 / NRRL Y-1140 / WM37)</name>
    <name type="common">Yeast</name>
    <name type="synonym">Candida sphaerica</name>
    <dbReference type="NCBI Taxonomy" id="284590"/>
    <lineage>
        <taxon>Eukaryota</taxon>
        <taxon>Fungi</taxon>
        <taxon>Dikarya</taxon>
        <taxon>Ascomycota</taxon>
        <taxon>Saccharomycotina</taxon>
        <taxon>Saccharomycetes</taxon>
        <taxon>Saccharomycetales</taxon>
        <taxon>Saccharomycetaceae</taxon>
        <taxon>Kluyveromyces</taxon>
    </lineage>
</organism>
<comment type="function">
    <text evidence="1">Plays an essential role in the assembly of succinate dehydrogenase (SDH), an enzyme complex (also referred to as respiratory complex II) that is a component of both the tricarboxylic acid (TCA) cycle and the mitochondrial electron transport chain, and which couples the oxidation of succinate to fumarate with the reduction of ubiquinone (coenzyme Q) to ubiquinol. Required for flavinylation (covalent attachment of FAD) of the flavoprotein subunit of the SDH catalytic dimer.</text>
</comment>
<comment type="subunit">
    <text evidence="1">Interacts with the flavoprotein subunit within the SDH catalytic dimer.</text>
</comment>
<comment type="subcellular location">
    <subcellularLocation>
        <location evidence="1">Mitochondrion matrix</location>
    </subcellularLocation>
</comment>
<comment type="miscellaneous">
    <text evidence="1">This protein may be expected to contain an N-terminal transit peptide but none has been predicted.</text>
</comment>
<comment type="similarity">
    <text evidence="1">Belongs to the SDHAF2 family.</text>
</comment>
<gene>
    <name type="ordered locus">KLLA0E13333g</name>
</gene>
<proteinExistence type="inferred from homology"/>
<evidence type="ECO:0000255" key="1">
    <source>
        <dbReference type="HAMAP-Rule" id="MF_03057"/>
    </source>
</evidence>
<dbReference type="EMBL" id="CR382125">
    <property type="protein sequence ID" value="CAG99637.1"/>
    <property type="molecule type" value="Genomic_DNA"/>
</dbReference>
<dbReference type="RefSeq" id="XP_454550.1">
    <property type="nucleotide sequence ID" value="XM_454550.1"/>
</dbReference>
<dbReference type="SMR" id="Q6CND9"/>
<dbReference type="FunCoup" id="Q6CND9">
    <property type="interactions" value="336"/>
</dbReference>
<dbReference type="STRING" id="284590.Q6CND9"/>
<dbReference type="PaxDb" id="284590-Q6CND9"/>
<dbReference type="KEGG" id="kla:KLLA0_E13333g"/>
<dbReference type="eggNOG" id="KOG3326">
    <property type="taxonomic scope" value="Eukaryota"/>
</dbReference>
<dbReference type="HOGENOM" id="CLU_103054_0_1_1"/>
<dbReference type="InParanoid" id="Q6CND9"/>
<dbReference type="OMA" id="YGKPQNP"/>
<dbReference type="Proteomes" id="UP000000598">
    <property type="component" value="Chromosome E"/>
</dbReference>
<dbReference type="GO" id="GO:0005759">
    <property type="term" value="C:mitochondrial matrix"/>
    <property type="evidence" value="ECO:0000250"/>
    <property type="project" value="UniProtKB"/>
</dbReference>
<dbReference type="GO" id="GO:0006121">
    <property type="term" value="P:mitochondrial electron transport, succinate to ubiquinone"/>
    <property type="evidence" value="ECO:0000250"/>
    <property type="project" value="UniProtKB"/>
</dbReference>
<dbReference type="GO" id="GO:0034553">
    <property type="term" value="P:mitochondrial respiratory chain complex II assembly"/>
    <property type="evidence" value="ECO:0007669"/>
    <property type="project" value="TreeGrafter"/>
</dbReference>
<dbReference type="GO" id="GO:0018293">
    <property type="term" value="P:protein-FAD linkage"/>
    <property type="evidence" value="ECO:0000250"/>
    <property type="project" value="UniProtKB"/>
</dbReference>
<dbReference type="GO" id="GO:0006099">
    <property type="term" value="P:tricarboxylic acid cycle"/>
    <property type="evidence" value="ECO:0007669"/>
    <property type="project" value="TreeGrafter"/>
</dbReference>
<dbReference type="FunFam" id="1.10.150.250:FF:000002">
    <property type="entry name" value="Succinate dehydrogenase assembly factor 2, mitochondrial"/>
    <property type="match status" value="1"/>
</dbReference>
<dbReference type="Gene3D" id="1.10.150.250">
    <property type="entry name" value="Flavinator of succinate dehydrogenase"/>
    <property type="match status" value="1"/>
</dbReference>
<dbReference type="HAMAP" id="MF_03057">
    <property type="entry name" value="SDHAF2"/>
    <property type="match status" value="1"/>
</dbReference>
<dbReference type="InterPro" id="IPR005631">
    <property type="entry name" value="SDH"/>
</dbReference>
<dbReference type="InterPro" id="IPR036714">
    <property type="entry name" value="SDH_sf"/>
</dbReference>
<dbReference type="InterPro" id="IPR028882">
    <property type="entry name" value="SDHAF2"/>
</dbReference>
<dbReference type="PANTHER" id="PTHR12469">
    <property type="entry name" value="PROTEIN EMI5 HOMOLOG, MITOCHONDRIAL"/>
    <property type="match status" value="1"/>
</dbReference>
<dbReference type="PANTHER" id="PTHR12469:SF2">
    <property type="entry name" value="SUCCINATE DEHYDROGENASE ASSEMBLY FACTOR 2, MITOCHONDRIAL"/>
    <property type="match status" value="1"/>
</dbReference>
<dbReference type="Pfam" id="PF03937">
    <property type="entry name" value="Sdh5"/>
    <property type="match status" value="1"/>
</dbReference>
<dbReference type="SUPFAM" id="SSF109910">
    <property type="entry name" value="YgfY-like"/>
    <property type="match status" value="1"/>
</dbReference>
<sequence length="163" mass="19057">MLRTVFNKPSVLKSGVNSITKQCRSLHANAYLLNKGNSNGAEGQDDDVTVRIRIPPIKRTGESLDKKRARLIYQSRKRGILETDLLLSRFAAKYLKEMTPEQLEEYDQLLNELDWDIYYWATENYSITPLPDRWKNSNILKQLQEFSKNKDREILSMPDLSKY</sequence>
<protein>
    <recommendedName>
        <fullName evidence="1">Succinate dehydrogenase assembly factor 2, mitochondrial</fullName>
        <shortName evidence="1">SDH assembly factor 2</shortName>
        <shortName evidence="1">SDHAF2</shortName>
    </recommendedName>
</protein>